<name>PSBX_PROMS</name>
<reference key="1">
    <citation type="journal article" date="2007" name="PLoS Genet.">
        <title>Patterns and implications of gene gain and loss in the evolution of Prochlorococcus.</title>
        <authorList>
            <person name="Kettler G.C."/>
            <person name="Martiny A.C."/>
            <person name="Huang K."/>
            <person name="Zucker J."/>
            <person name="Coleman M.L."/>
            <person name="Rodrigue S."/>
            <person name="Chen F."/>
            <person name="Lapidus A."/>
            <person name="Ferriera S."/>
            <person name="Johnson J."/>
            <person name="Steglich C."/>
            <person name="Church G.M."/>
            <person name="Richardson P."/>
            <person name="Chisholm S.W."/>
        </authorList>
    </citation>
    <scope>NUCLEOTIDE SEQUENCE [LARGE SCALE GENOMIC DNA]</scope>
    <source>
        <strain>AS9601</strain>
    </source>
</reference>
<gene>
    <name evidence="1" type="primary">psbX</name>
    <name type="ordered locus">A9601_00741</name>
</gene>
<sequence>MFQISNLLIAADFSAEVANNSAVGMIGSFIAAALLIVVPATAFLIFVSQKDSLDRTSTGRR</sequence>
<evidence type="ECO:0000255" key="1">
    <source>
        <dbReference type="HAMAP-Rule" id="MF_01388"/>
    </source>
</evidence>
<dbReference type="EMBL" id="CP000551">
    <property type="protein sequence ID" value="ABM69362.1"/>
    <property type="molecule type" value="Genomic_DNA"/>
</dbReference>
<dbReference type="RefSeq" id="WP_011817552.1">
    <property type="nucleotide sequence ID" value="NC_008816.1"/>
</dbReference>
<dbReference type="SMR" id="A2BNK1"/>
<dbReference type="STRING" id="146891.A9601_00741"/>
<dbReference type="KEGG" id="pmb:A9601_00741"/>
<dbReference type="HOGENOM" id="CLU_209178_0_0_3"/>
<dbReference type="OrthoDB" id="541645at2"/>
<dbReference type="Proteomes" id="UP000002590">
    <property type="component" value="Chromosome"/>
</dbReference>
<dbReference type="GO" id="GO:0009523">
    <property type="term" value="C:photosystem II"/>
    <property type="evidence" value="ECO:0007669"/>
    <property type="project" value="UniProtKB-KW"/>
</dbReference>
<dbReference type="GO" id="GO:0031676">
    <property type="term" value="C:plasma membrane-derived thylakoid membrane"/>
    <property type="evidence" value="ECO:0007669"/>
    <property type="project" value="UniProtKB-SubCell"/>
</dbReference>
<dbReference type="GO" id="GO:0015979">
    <property type="term" value="P:photosynthesis"/>
    <property type="evidence" value="ECO:0007669"/>
    <property type="project" value="UniProtKB-KW"/>
</dbReference>
<dbReference type="HAMAP" id="MF_01388">
    <property type="entry name" value="PSII_PsbX_2"/>
    <property type="match status" value="1"/>
</dbReference>
<dbReference type="InterPro" id="IPR009518">
    <property type="entry name" value="PSII_PsbX"/>
</dbReference>
<dbReference type="InterPro" id="IPR023428">
    <property type="entry name" value="PSII_PsbX_type_2_subfam"/>
</dbReference>
<dbReference type="Pfam" id="PF06596">
    <property type="entry name" value="PsbX"/>
    <property type="match status" value="1"/>
</dbReference>
<comment type="function">
    <text evidence="1">Involved in the binding and/or turnover of quinones at the Q(B) site of Photosystem II.</text>
</comment>
<comment type="subunit">
    <text evidence="1">PSII consists of a core antenna complex that captures photons, and an electron transfer chain that converts photonic excitation into a charge separation. PSII forms dimeric complexes.</text>
</comment>
<comment type="subcellular location">
    <subcellularLocation>
        <location evidence="1">Cellular thylakoid membrane</location>
        <topology evidence="1">Single-pass membrane protein</topology>
    </subcellularLocation>
</comment>
<comment type="similarity">
    <text evidence="1">Belongs to the PsbX family. Type 2 subfamily.</text>
</comment>
<protein>
    <recommendedName>
        <fullName evidence="1">Photosystem II reaction center X protein</fullName>
    </recommendedName>
</protein>
<keyword id="KW-0472">Membrane</keyword>
<keyword id="KW-0602">Photosynthesis</keyword>
<keyword id="KW-0604">Photosystem II</keyword>
<keyword id="KW-0793">Thylakoid</keyword>
<keyword id="KW-0812">Transmembrane</keyword>
<keyword id="KW-1133">Transmembrane helix</keyword>
<feature type="chain" id="PRO_0000345368" description="Photosystem II reaction center X protein">
    <location>
        <begin position="1"/>
        <end position="61"/>
    </location>
</feature>
<feature type="transmembrane region" description="Helical" evidence="1">
    <location>
        <begin position="26"/>
        <end position="46"/>
    </location>
</feature>
<accession>A2BNK1</accession>
<proteinExistence type="inferred from homology"/>
<organism>
    <name type="scientific">Prochlorococcus marinus (strain AS9601)</name>
    <dbReference type="NCBI Taxonomy" id="146891"/>
    <lineage>
        <taxon>Bacteria</taxon>
        <taxon>Bacillati</taxon>
        <taxon>Cyanobacteriota</taxon>
        <taxon>Cyanophyceae</taxon>
        <taxon>Synechococcales</taxon>
        <taxon>Prochlorococcaceae</taxon>
        <taxon>Prochlorococcus</taxon>
    </lineage>
</organism>